<evidence type="ECO:0000255" key="1">
    <source>
        <dbReference type="PROSITE-ProRule" id="PRU01058"/>
    </source>
</evidence>
<evidence type="ECO:0000269" key="2">
    <source>
    </source>
</evidence>
<sequence length="366" mass="40999">MEKVVCIGCGVTIQTEDKTGLGYAPPASLTKENVICQRCFRLKNYNEIQDVSLTDDDFLNILHGIGETDSLVVKIVDIFDFNGSWINGLQRLVGGNPILLVGNKADILPKSLKRERLIQWMKREAKELGLKPVDVFLVSAGRGQGIREVIDAIEHYRNGKDVYVVGCTNVGKSTFINRIIKEVSGEEDIITTSQFPGTTLDAIEIPLDDGSSLYDTPGIINNHQMAHYVNKKDLKILSPKKELKPRTFQLNDQQTLYFGGLARFDYVSGERSPFICYMPNELMIHRTKLENADALYEKHAGELLTPPGKDEMDEFPELVAHTFTIKDKKTDIVFSGLGWVTVHDADKKVTAYAPKGVHVFVRRSLI</sequence>
<name>YQEH_BACSU</name>
<dbReference type="EMBL" id="D84432">
    <property type="protein sequence ID" value="BAA12444.1"/>
    <property type="molecule type" value="Genomic_DNA"/>
</dbReference>
<dbReference type="EMBL" id="AL009126">
    <property type="protein sequence ID" value="CAB14509.1"/>
    <property type="molecule type" value="Genomic_DNA"/>
</dbReference>
<dbReference type="PIR" id="D69951">
    <property type="entry name" value="D69951"/>
</dbReference>
<dbReference type="RefSeq" id="WP_003229966.1">
    <property type="nucleotide sequence ID" value="NZ_OZ025638.1"/>
</dbReference>
<dbReference type="SMR" id="P54453"/>
<dbReference type="FunCoup" id="P54453">
    <property type="interactions" value="476"/>
</dbReference>
<dbReference type="STRING" id="224308.BSU25670"/>
<dbReference type="PaxDb" id="224308-BSU25670"/>
<dbReference type="EnsemblBacteria" id="CAB14509">
    <property type="protein sequence ID" value="CAB14509"/>
    <property type="gene ID" value="BSU_25670"/>
</dbReference>
<dbReference type="GeneID" id="937822"/>
<dbReference type="KEGG" id="bsu:BSU25670"/>
<dbReference type="PATRIC" id="fig|224308.179.peg.2790"/>
<dbReference type="eggNOG" id="COG1161">
    <property type="taxonomic scope" value="Bacteria"/>
</dbReference>
<dbReference type="InParanoid" id="P54453"/>
<dbReference type="OrthoDB" id="9773841at2"/>
<dbReference type="PhylomeDB" id="P54453"/>
<dbReference type="BioCyc" id="BSUB:BSU25670-MONOMER"/>
<dbReference type="Proteomes" id="UP000001570">
    <property type="component" value="Chromosome"/>
</dbReference>
<dbReference type="GO" id="GO:0005525">
    <property type="term" value="F:GTP binding"/>
    <property type="evidence" value="ECO:0007669"/>
    <property type="project" value="UniProtKB-KW"/>
</dbReference>
<dbReference type="GO" id="GO:0032297">
    <property type="term" value="P:negative regulation of DNA-templated DNA replication initiation"/>
    <property type="evidence" value="ECO:0000314"/>
    <property type="project" value="CACAO"/>
</dbReference>
<dbReference type="CDD" id="cd01855">
    <property type="entry name" value="YqeH"/>
    <property type="match status" value="1"/>
</dbReference>
<dbReference type="Gene3D" id="3.40.50.300">
    <property type="entry name" value="P-loop containing nucleotide triphosphate hydrolases"/>
    <property type="match status" value="1"/>
</dbReference>
<dbReference type="InterPro" id="IPR030378">
    <property type="entry name" value="G_CP_dom"/>
</dbReference>
<dbReference type="InterPro" id="IPR006073">
    <property type="entry name" value="GTP-bd"/>
</dbReference>
<dbReference type="InterPro" id="IPR019988">
    <property type="entry name" value="GTP-bd_ribosome_bgen_YqeH"/>
</dbReference>
<dbReference type="InterPro" id="IPR050896">
    <property type="entry name" value="Mito_lipid_metab_GTPase"/>
</dbReference>
<dbReference type="InterPro" id="IPR048422">
    <property type="entry name" value="NOA1/YqeH-like_C"/>
</dbReference>
<dbReference type="InterPro" id="IPR027417">
    <property type="entry name" value="P-loop_NTPase"/>
</dbReference>
<dbReference type="NCBIfam" id="TIGR03597">
    <property type="entry name" value="GTPase_YqeH"/>
    <property type="match status" value="1"/>
</dbReference>
<dbReference type="PANTHER" id="PTHR46434">
    <property type="entry name" value="GENETIC INTERACTOR OF PROHIBITINS 3, MITOCHONDRIAL"/>
    <property type="match status" value="1"/>
</dbReference>
<dbReference type="PANTHER" id="PTHR46434:SF1">
    <property type="entry name" value="GENETIC INTERACTOR OF PROHIBITINS 3, MITOCHONDRIAL"/>
    <property type="match status" value="1"/>
</dbReference>
<dbReference type="Pfam" id="PF01926">
    <property type="entry name" value="MMR_HSR1"/>
    <property type="match status" value="1"/>
</dbReference>
<dbReference type="Pfam" id="PF21516">
    <property type="entry name" value="YqeH-like_C"/>
    <property type="match status" value="1"/>
</dbReference>
<dbReference type="SUPFAM" id="SSF52540">
    <property type="entry name" value="P-loop containing nucleoside triphosphate hydrolases"/>
    <property type="match status" value="1"/>
</dbReference>
<dbReference type="PROSITE" id="PS51721">
    <property type="entry name" value="G_CP"/>
    <property type="match status" value="1"/>
</dbReference>
<accession>P54453</accession>
<keyword id="KW-0342">GTP-binding</keyword>
<keyword id="KW-0547">Nucleotide-binding</keyword>
<keyword id="KW-1185">Reference proteome</keyword>
<reference key="1">
    <citation type="journal article" date="1996" name="Microbiology">
        <title>Systematic sequencing of the 283 kb 210 degrees-232 degrees region of the Bacillus subtilis genome containing the skin element and many sporulation genes.</title>
        <authorList>
            <person name="Mizuno M."/>
            <person name="Masuda S."/>
            <person name="Takemaru K."/>
            <person name="Hosono S."/>
            <person name="Sato T."/>
            <person name="Takeuchi M."/>
            <person name="Kobayashi Y."/>
        </authorList>
    </citation>
    <scope>NUCLEOTIDE SEQUENCE [GENOMIC DNA]</scope>
    <source>
        <strain>168 / JH642</strain>
    </source>
</reference>
<reference key="2">
    <citation type="journal article" date="1997" name="Nature">
        <title>The complete genome sequence of the Gram-positive bacterium Bacillus subtilis.</title>
        <authorList>
            <person name="Kunst F."/>
            <person name="Ogasawara N."/>
            <person name="Moszer I."/>
            <person name="Albertini A.M."/>
            <person name="Alloni G."/>
            <person name="Azevedo V."/>
            <person name="Bertero M.G."/>
            <person name="Bessieres P."/>
            <person name="Bolotin A."/>
            <person name="Borchert S."/>
            <person name="Borriss R."/>
            <person name="Boursier L."/>
            <person name="Brans A."/>
            <person name="Braun M."/>
            <person name="Brignell S.C."/>
            <person name="Bron S."/>
            <person name="Brouillet S."/>
            <person name="Bruschi C.V."/>
            <person name="Caldwell B."/>
            <person name="Capuano V."/>
            <person name="Carter N.M."/>
            <person name="Choi S.-K."/>
            <person name="Codani J.-J."/>
            <person name="Connerton I.F."/>
            <person name="Cummings N.J."/>
            <person name="Daniel R.A."/>
            <person name="Denizot F."/>
            <person name="Devine K.M."/>
            <person name="Duesterhoeft A."/>
            <person name="Ehrlich S.D."/>
            <person name="Emmerson P.T."/>
            <person name="Entian K.-D."/>
            <person name="Errington J."/>
            <person name="Fabret C."/>
            <person name="Ferrari E."/>
            <person name="Foulger D."/>
            <person name="Fritz C."/>
            <person name="Fujita M."/>
            <person name="Fujita Y."/>
            <person name="Fuma S."/>
            <person name="Galizzi A."/>
            <person name="Galleron N."/>
            <person name="Ghim S.-Y."/>
            <person name="Glaser P."/>
            <person name="Goffeau A."/>
            <person name="Golightly E.J."/>
            <person name="Grandi G."/>
            <person name="Guiseppi G."/>
            <person name="Guy B.J."/>
            <person name="Haga K."/>
            <person name="Haiech J."/>
            <person name="Harwood C.R."/>
            <person name="Henaut A."/>
            <person name="Hilbert H."/>
            <person name="Holsappel S."/>
            <person name="Hosono S."/>
            <person name="Hullo M.-F."/>
            <person name="Itaya M."/>
            <person name="Jones L.-M."/>
            <person name="Joris B."/>
            <person name="Karamata D."/>
            <person name="Kasahara Y."/>
            <person name="Klaerr-Blanchard M."/>
            <person name="Klein C."/>
            <person name="Kobayashi Y."/>
            <person name="Koetter P."/>
            <person name="Koningstein G."/>
            <person name="Krogh S."/>
            <person name="Kumano M."/>
            <person name="Kurita K."/>
            <person name="Lapidus A."/>
            <person name="Lardinois S."/>
            <person name="Lauber J."/>
            <person name="Lazarevic V."/>
            <person name="Lee S.-M."/>
            <person name="Levine A."/>
            <person name="Liu H."/>
            <person name="Masuda S."/>
            <person name="Mauel C."/>
            <person name="Medigue C."/>
            <person name="Medina N."/>
            <person name="Mellado R.P."/>
            <person name="Mizuno M."/>
            <person name="Moestl D."/>
            <person name="Nakai S."/>
            <person name="Noback M."/>
            <person name="Noone D."/>
            <person name="O'Reilly M."/>
            <person name="Ogawa K."/>
            <person name="Ogiwara A."/>
            <person name="Oudega B."/>
            <person name="Park S.-H."/>
            <person name="Parro V."/>
            <person name="Pohl T.M."/>
            <person name="Portetelle D."/>
            <person name="Porwollik S."/>
            <person name="Prescott A.M."/>
            <person name="Presecan E."/>
            <person name="Pujic P."/>
            <person name="Purnelle B."/>
            <person name="Rapoport G."/>
            <person name="Rey M."/>
            <person name="Reynolds S."/>
            <person name="Rieger M."/>
            <person name="Rivolta C."/>
            <person name="Rocha E."/>
            <person name="Roche B."/>
            <person name="Rose M."/>
            <person name="Sadaie Y."/>
            <person name="Sato T."/>
            <person name="Scanlan E."/>
            <person name="Schleich S."/>
            <person name="Schroeter R."/>
            <person name="Scoffone F."/>
            <person name="Sekiguchi J."/>
            <person name="Sekowska A."/>
            <person name="Seror S.J."/>
            <person name="Serror P."/>
            <person name="Shin B.-S."/>
            <person name="Soldo B."/>
            <person name="Sorokin A."/>
            <person name="Tacconi E."/>
            <person name="Takagi T."/>
            <person name="Takahashi H."/>
            <person name="Takemaru K."/>
            <person name="Takeuchi M."/>
            <person name="Tamakoshi A."/>
            <person name="Tanaka T."/>
            <person name="Terpstra P."/>
            <person name="Tognoni A."/>
            <person name="Tosato V."/>
            <person name="Uchiyama S."/>
            <person name="Vandenbol M."/>
            <person name="Vannier F."/>
            <person name="Vassarotti A."/>
            <person name="Viari A."/>
            <person name="Wambutt R."/>
            <person name="Wedler E."/>
            <person name="Wedler H."/>
            <person name="Weitzenegger T."/>
            <person name="Winters P."/>
            <person name="Wipat A."/>
            <person name="Yamamoto H."/>
            <person name="Yamane K."/>
            <person name="Yasumoto K."/>
            <person name="Yata K."/>
            <person name="Yoshida K."/>
            <person name="Yoshikawa H.-F."/>
            <person name="Zumstein E."/>
            <person name="Yoshikawa H."/>
            <person name="Danchin A."/>
        </authorList>
    </citation>
    <scope>NUCLEOTIDE SEQUENCE [LARGE SCALE GENOMIC DNA]</scope>
    <source>
        <strain>168</strain>
    </source>
</reference>
<reference key="3">
    <citation type="journal article" date="2002" name="Microbiology">
        <title>Six GTP-binding proteins of the Era/Obg family are essential for cell growth in Bacillus subtilis.</title>
        <authorList>
            <person name="Morimoto T."/>
            <person name="Loh P.C."/>
            <person name="Hirai T."/>
            <person name="Asai K."/>
            <person name="Kobayashi K."/>
            <person name="Moriya S."/>
            <person name="Ogasawara N."/>
        </authorList>
    </citation>
    <scope>GTP- AND GDP-BINDING</scope>
    <scope>PROTEIN LEVELS</scope>
    <scope>DISRUPTION PHENOTYPE</scope>
    <source>
        <strain>CRK6000</strain>
    </source>
</reference>
<proteinExistence type="evidence at protein level"/>
<feature type="chain" id="PRO_0000049785" description="Uncharacterized protein YqeH">
    <location>
        <begin position="1"/>
        <end position="366"/>
    </location>
</feature>
<feature type="domain" description="CP-type G" evidence="1">
    <location>
        <begin position="59"/>
        <end position="222"/>
    </location>
</feature>
<comment type="function">
    <text>Binds GTP and GDP.</text>
</comment>
<comment type="disruption phenotype">
    <text evidence="2">Essential for growth, it cannot be disrupted. In depletion experiments cells become 1.5 to 2-fold longer and nucleoid distribution is dispersed. The number of replication origins increases, suggesting an increase in chromosome replication.</text>
</comment>
<comment type="miscellaneous">
    <text>Estimated to be present at 2000 copies per cell.</text>
</comment>
<comment type="similarity">
    <text evidence="1">Belongs to the TRAFAC class YlqF/YawG GTPase family.</text>
</comment>
<gene>
    <name type="primary">yqeH</name>
    <name type="ordered locus">BSU25670</name>
</gene>
<organism>
    <name type="scientific">Bacillus subtilis (strain 168)</name>
    <dbReference type="NCBI Taxonomy" id="224308"/>
    <lineage>
        <taxon>Bacteria</taxon>
        <taxon>Bacillati</taxon>
        <taxon>Bacillota</taxon>
        <taxon>Bacilli</taxon>
        <taxon>Bacillales</taxon>
        <taxon>Bacillaceae</taxon>
        <taxon>Bacillus</taxon>
    </lineage>
</organism>
<protein>
    <recommendedName>
        <fullName>Uncharacterized protein YqeH</fullName>
    </recommendedName>
</protein>